<gene>
    <name evidence="6" type="primary">CDPK6</name>
    <name evidence="6" type="ORF">PB001122.01.0</name>
    <name evidence="8" type="ORF">PBANKA_0925500</name>
</gene>
<reference evidence="9" key="1">
    <citation type="journal article" date="2014" name="BMC Biol.">
        <title>A comprehensive evaluation of rodent malaria parasite genomes and gene expression.</title>
        <authorList>
            <person name="Otto T.D."/>
            <person name="Bohme U."/>
            <person name="Jackson A.P."/>
            <person name="Hunt M."/>
            <person name="Franke-Fayard B."/>
            <person name="Hoeijmakers W.A."/>
            <person name="Religa A.A."/>
            <person name="Robertson L."/>
            <person name="Sanders M."/>
            <person name="Ogun S.A."/>
            <person name="Cunningham D."/>
            <person name="Erhart A."/>
            <person name="Billker O."/>
            <person name="Khan S.M."/>
            <person name="Stunnenberg H.G."/>
            <person name="Langhorne J."/>
            <person name="Holder A.A."/>
            <person name="Waters A.P."/>
            <person name="Newbold C.I."/>
            <person name="Pain A."/>
            <person name="Berriman M."/>
            <person name="Janse C.J."/>
        </authorList>
    </citation>
    <scope>NUCLEOTIDE SEQUENCE [LARGE SCALE GENOMIC DNA]</scope>
    <source>
        <strain evidence="9">ANKA</strain>
    </source>
</reference>
<reference evidence="7" key="2">
    <citation type="journal article" date="2007" name="Cell Host Microbe">
        <title>Heparan sulfate proteoglycans provide a signal to Plasmodium sporozoites to stop migrating and productively invade host cells.</title>
        <authorList>
            <person name="Coppi A."/>
            <person name="Tewari R."/>
            <person name="Bishop J.R."/>
            <person name="Bennett B.L."/>
            <person name="Lawrence R."/>
            <person name="Esko J.D."/>
            <person name="Billker O."/>
            <person name="Sinnis P."/>
        </authorList>
    </citation>
    <scope>FUNCTION</scope>
    <scope>DISRUPTION PHENOTYPE</scope>
</reference>
<dbReference type="EC" id="2.7.11.1" evidence="1"/>
<dbReference type="EMBL" id="LK023124">
    <property type="protein sequence ID" value="VUC55795.1"/>
    <property type="molecule type" value="Genomic_DNA"/>
</dbReference>
<dbReference type="SMR" id="A0A509ALV6"/>
<dbReference type="FunCoup" id="A0A509ALV6">
    <property type="interactions" value="5"/>
</dbReference>
<dbReference type="STRING" id="5823.A0A509ALV6"/>
<dbReference type="VEuPathDB" id="PlasmoDB:PBANKA_0925500"/>
<dbReference type="InParanoid" id="A0A509ALV6"/>
<dbReference type="OMA" id="EYHIDAC"/>
<dbReference type="Proteomes" id="UP000074855">
    <property type="component" value="Chromosome 9"/>
</dbReference>
<dbReference type="GO" id="GO:0005524">
    <property type="term" value="F:ATP binding"/>
    <property type="evidence" value="ECO:0007669"/>
    <property type="project" value="UniProtKB-KW"/>
</dbReference>
<dbReference type="GO" id="GO:0005509">
    <property type="term" value="F:calcium ion binding"/>
    <property type="evidence" value="ECO:0007669"/>
    <property type="project" value="InterPro"/>
</dbReference>
<dbReference type="GO" id="GO:0004674">
    <property type="term" value="F:protein serine/threonine kinase activity"/>
    <property type="evidence" value="ECO:0007669"/>
    <property type="project" value="UniProtKB-KW"/>
</dbReference>
<dbReference type="FunFam" id="3.30.200.20:FF:000315">
    <property type="entry name" value="Calcium-dependent protein kinase 3"/>
    <property type="match status" value="1"/>
</dbReference>
<dbReference type="FunFam" id="1.10.510.10:FF:000766">
    <property type="entry name" value="CAMK/CDPK protein kinase"/>
    <property type="match status" value="1"/>
</dbReference>
<dbReference type="Gene3D" id="1.10.238.10">
    <property type="entry name" value="EF-hand"/>
    <property type="match status" value="1"/>
</dbReference>
<dbReference type="Gene3D" id="3.30.200.20">
    <property type="entry name" value="Phosphorylase Kinase, domain 1"/>
    <property type="match status" value="1"/>
</dbReference>
<dbReference type="Gene3D" id="1.10.510.10">
    <property type="entry name" value="Transferase(Phosphotransferase) domain 1"/>
    <property type="match status" value="1"/>
</dbReference>
<dbReference type="InterPro" id="IPR050205">
    <property type="entry name" value="CDPK_Ser/Thr_kinases"/>
</dbReference>
<dbReference type="InterPro" id="IPR011992">
    <property type="entry name" value="EF-hand-dom_pair"/>
</dbReference>
<dbReference type="InterPro" id="IPR018247">
    <property type="entry name" value="EF_Hand_1_Ca_BS"/>
</dbReference>
<dbReference type="InterPro" id="IPR002048">
    <property type="entry name" value="EF_hand_dom"/>
</dbReference>
<dbReference type="InterPro" id="IPR011009">
    <property type="entry name" value="Kinase-like_dom_sf"/>
</dbReference>
<dbReference type="InterPro" id="IPR000719">
    <property type="entry name" value="Prot_kinase_dom"/>
</dbReference>
<dbReference type="InterPro" id="IPR008271">
    <property type="entry name" value="Ser/Thr_kinase_AS"/>
</dbReference>
<dbReference type="PANTHER" id="PTHR24349">
    <property type="entry name" value="SERINE/THREONINE-PROTEIN KINASE"/>
    <property type="match status" value="1"/>
</dbReference>
<dbReference type="Pfam" id="PF13202">
    <property type="entry name" value="EF-hand_5"/>
    <property type="match status" value="1"/>
</dbReference>
<dbReference type="Pfam" id="PF00069">
    <property type="entry name" value="Pkinase"/>
    <property type="match status" value="1"/>
</dbReference>
<dbReference type="SMART" id="SM00054">
    <property type="entry name" value="EFh"/>
    <property type="match status" value="4"/>
</dbReference>
<dbReference type="SMART" id="SM00220">
    <property type="entry name" value="S_TKc"/>
    <property type="match status" value="1"/>
</dbReference>
<dbReference type="SUPFAM" id="SSF47473">
    <property type="entry name" value="EF-hand"/>
    <property type="match status" value="2"/>
</dbReference>
<dbReference type="SUPFAM" id="SSF56112">
    <property type="entry name" value="Protein kinase-like (PK-like)"/>
    <property type="match status" value="1"/>
</dbReference>
<dbReference type="PROSITE" id="PS00018">
    <property type="entry name" value="EF_HAND_1"/>
    <property type="match status" value="3"/>
</dbReference>
<dbReference type="PROSITE" id="PS50222">
    <property type="entry name" value="EF_HAND_2"/>
    <property type="match status" value="6"/>
</dbReference>
<dbReference type="PROSITE" id="PS50011">
    <property type="entry name" value="PROTEIN_KINASE_DOM"/>
    <property type="match status" value="1"/>
</dbReference>
<dbReference type="PROSITE" id="PS00108">
    <property type="entry name" value="PROTEIN_KINASE_ST"/>
    <property type="match status" value="1"/>
</dbReference>
<keyword id="KW-0067">ATP-binding</keyword>
<keyword id="KW-0106">Calcium</keyword>
<keyword id="KW-0418">Kinase</keyword>
<keyword id="KW-0460">Magnesium</keyword>
<keyword id="KW-0479">Metal-binding</keyword>
<keyword id="KW-0547">Nucleotide-binding</keyword>
<keyword id="KW-1185">Reference proteome</keyword>
<keyword id="KW-0677">Repeat</keyword>
<keyword id="KW-0723">Serine/threonine-protein kinase</keyword>
<keyword id="KW-0808">Transferase</keyword>
<protein>
    <recommendedName>
        <fullName evidence="6">Calcium-dependent protein kinase 6</fullName>
        <ecNumber evidence="1">2.7.11.1</ecNumber>
    </recommendedName>
</protein>
<name>CDPK6_PLABA</name>
<organism evidence="9">
    <name type="scientific">Plasmodium berghei (strain Anka)</name>
    <dbReference type="NCBI Taxonomy" id="5823"/>
    <lineage>
        <taxon>Eukaryota</taxon>
        <taxon>Sar</taxon>
        <taxon>Alveolata</taxon>
        <taxon>Apicomplexa</taxon>
        <taxon>Aconoidasida</taxon>
        <taxon>Haemosporida</taxon>
        <taxon>Plasmodiidae</taxon>
        <taxon>Plasmodium</taxon>
        <taxon>Plasmodium (Vinckeia)</taxon>
    </lineage>
</organism>
<evidence type="ECO:0000250" key="1">
    <source>
        <dbReference type="UniProtKB" id="P62344"/>
    </source>
</evidence>
<evidence type="ECO:0000255" key="2">
    <source>
        <dbReference type="PROSITE-ProRule" id="PRU00159"/>
    </source>
</evidence>
<evidence type="ECO:0000255" key="3">
    <source>
        <dbReference type="PROSITE-ProRule" id="PRU00448"/>
    </source>
</evidence>
<evidence type="ECO:0000256" key="4">
    <source>
        <dbReference type="SAM" id="MobiDB-lite"/>
    </source>
</evidence>
<evidence type="ECO:0000269" key="5">
    <source>
    </source>
</evidence>
<evidence type="ECO:0000303" key="6">
    <source>
    </source>
</evidence>
<evidence type="ECO:0000305" key="7"/>
<evidence type="ECO:0000312" key="8">
    <source>
        <dbReference type="EMBL" id="VUC55795.1"/>
    </source>
</evidence>
<evidence type="ECO:0000312" key="9">
    <source>
        <dbReference type="Proteomes" id="UP000074855"/>
    </source>
</evidence>
<accession>A0A509ALV6</accession>
<sequence>MVLELLKNNYERNDEHYYNEKVENNTSKHKKKKKKKKKHILVEESEKYDRNIDSENNEEAYNAYELIKTKPNNIYEEKYDFSFQNLDKKCLREKNNMRESYRNSKDIIQYGTNENDIFTEDMLENDNFDDDSFVEDDTMDYKTYNSYTKPEFNLFSKYSTESKKKNIMNNKKHSKIEDFYKKYKNNSEYSKQANEHDASIIQFLNNNKKSVDCGKMKDINFKKNDSQNYSESNKYKNEFFKNYNYDNKYTNNYAHDNNQDSNSYYYADENEPKDNHEEDNDTGDTYADNEEDEDNRDDNDDYSQYNQCEVESDTNQIRPNEKRYNESIKHINDSNLKINKELLLKRETYTKRDNIFYIKKDIIPYKKEHNNNRFSLYDSSKNNNEHNNNYEIKFMNYKKDSEKEGEQWLKNIKKEKDEEFLKKYMYENALKKTHSSKDLQFNRLDDEKNILHHDINVDNKMVRLDKYERSNIRDMRNKTNKCNMLRHDTAEFNKIRRKDEINNYSEYANKCLAGNIYEEDDSYILKRNELGHKELKVIDNPILNINPDDKKKPNIKSFLDKIKYRKNNELFLKNEHEKYVGIQETNKKDKIKMKFADILHTKNFSNFFHRGKNSIAKSLSPNNDKKNTSFNNEVFNLNILGKNDKNSDYKQYNINCSPYDHENTSFHPSVREETKYYENKESRKRLDYNCDEDNYIENSIQRYHENNIDYNSINIERTINLREDIKYNEFLNKPDKINSENFSNNFNDNKQKSLKNDDSNKIRDTNKLYYHDHLENTMRSNYIQKEYTEKISDILESNSNNMRKFINKMDYYTKKYEQNLYKNDEDIYTKENKFPDSRKEFYNKSDSPMKVTDGIKDSQYENYNRIKYKLKMKQEKQDKEDETDINIDKKLSRKMIENNKLKEENESNDELIVTPFYIKSKIDKVLKNSEIFERSARATFKQFDVKNKNFLHFSEIESLIQKLCYNLELPPVDKKILSIVYKDYDSSKNNCMNYMDFRQMYWDLLKQIKKKYYPTKNFKIKRNCIISRKKLQGYDYSSIYNYLSFKKILGCGAFGEVHLVEDNICKLYKVVKILKKKKMKNIKVNEEINVLIYLDHPNIIKIFDVYESVNCTYIVMELCEGGELMNKIKKPQIFSETYIKNIMFQILCAIAYMHSNNIAHKDLKPENILFKTDGYDTLKIIDFGLAELINKSEGISKTAAGTVLYMAPEVFKKKFTIKCDIWSAGVIMYFLFTKSLPFTGNTYEEVKQNIFNSEPDYQFLKLKMSKPALHLLKLMLEKDYSRRPMAAVLLHHPWFQGYFDPIDILPSTLNNIKSYMKHSNIRNVIVNIMAHELCVINNHVKYINDIFLKIDSNHNGSLSHREIYNVLSNAGVKKWDINRIIQALDVNDKGCITYTEFIAGCYRWKNIDSTFLKAAFNKIDKDEDGYISKSDLATLVHDNGVNNKDIENFFISVHSIKKNITKDKKINKISFEDFKDYMLSTF</sequence>
<proteinExistence type="inferred from homology"/>
<comment type="function">
    <text evidence="1 5">Calcium-dependent protein kinase which acts as a sensor and effector of intracellular Ca(2+) levels (By similarity). In sporozoites, probably involved in the secretion of the cysteine protease that cleaves circumsporozoite protein CSP, thereby exposing CSP TSR domain, which binds with high affinity to highly sulfated heparan sulfate proteoglycans (HSPGs), resulting in productive invasion of the host hepatocytes (PubMed:18005753).</text>
</comment>
<comment type="catalytic activity">
    <reaction evidence="1">
        <text>L-seryl-[protein] + ATP = O-phospho-L-seryl-[protein] + ADP + H(+)</text>
        <dbReference type="Rhea" id="RHEA:17989"/>
        <dbReference type="Rhea" id="RHEA-COMP:9863"/>
        <dbReference type="Rhea" id="RHEA-COMP:11604"/>
        <dbReference type="ChEBI" id="CHEBI:15378"/>
        <dbReference type="ChEBI" id="CHEBI:29999"/>
        <dbReference type="ChEBI" id="CHEBI:30616"/>
        <dbReference type="ChEBI" id="CHEBI:83421"/>
        <dbReference type="ChEBI" id="CHEBI:456216"/>
        <dbReference type="EC" id="2.7.11.1"/>
    </reaction>
</comment>
<comment type="catalytic activity">
    <reaction evidence="1">
        <text>L-threonyl-[protein] + ATP = O-phospho-L-threonyl-[protein] + ADP + H(+)</text>
        <dbReference type="Rhea" id="RHEA:46608"/>
        <dbReference type="Rhea" id="RHEA-COMP:11060"/>
        <dbReference type="Rhea" id="RHEA-COMP:11605"/>
        <dbReference type="ChEBI" id="CHEBI:15378"/>
        <dbReference type="ChEBI" id="CHEBI:30013"/>
        <dbReference type="ChEBI" id="CHEBI:30616"/>
        <dbReference type="ChEBI" id="CHEBI:61977"/>
        <dbReference type="ChEBI" id="CHEBI:456216"/>
        <dbReference type="EC" id="2.7.11.1"/>
    </reaction>
</comment>
<comment type="cofactor">
    <cofactor evidence="1">
        <name>Mg(2+)</name>
        <dbReference type="ChEBI" id="CHEBI:18420"/>
    </cofactor>
</comment>
<comment type="activity regulation">
    <text evidence="1">Activated by calcium.</text>
</comment>
<comment type="domain">
    <text evidence="7">The EF-hand domains 1, 4 and 6 appear to lack a functional calcium binding site.</text>
</comment>
<comment type="domain">
    <text evidence="7">It is unclear if CDPK6 has the junction domain (J domain) found in other CDPKs.</text>
</comment>
<comment type="disruption phenotype">
    <text evidence="5">Sporozoites display enhanced migratory activity and are less infective for host hepatocytes (PubMed:18005753). Severe decrease in circumsporozoite protein CSP proteolytic cleavage upon sporozoite contact with host hepatocytes (PubMed:18005753).</text>
</comment>
<comment type="similarity">
    <text evidence="7">Belongs to the protein kinase superfamily. Ser/Thr protein kinase family. CDPK subfamily.</text>
</comment>
<feature type="chain" id="PRO_0000455604" description="Calcium-dependent protein kinase 6">
    <location>
        <begin position="1"/>
        <end position="1482"/>
    </location>
</feature>
<feature type="domain" description="EF-hand 1" evidence="3">
    <location>
        <begin position="931"/>
        <end position="966"/>
    </location>
</feature>
<feature type="domain" description="EF-hand 2" evidence="3">
    <location>
        <begin position="972"/>
        <end position="1007"/>
    </location>
</feature>
<feature type="domain" description="Protein kinase" evidence="2">
    <location>
        <begin position="1043"/>
        <end position="1295"/>
    </location>
</feature>
<feature type="domain" description="EF-hand 3" evidence="3">
    <location>
        <begin position="1338"/>
        <end position="1373"/>
    </location>
</feature>
<feature type="domain" description="EF-hand 4" evidence="3">
    <location>
        <begin position="1376"/>
        <end position="1406"/>
    </location>
</feature>
<feature type="domain" description="EF-hand 5" evidence="3">
    <location>
        <begin position="1407"/>
        <end position="1442"/>
    </location>
</feature>
<feature type="domain" description="EF-hand 6" evidence="3">
    <location>
        <begin position="1468"/>
        <end position="1482"/>
    </location>
</feature>
<feature type="region of interest" description="Disordered" evidence="4">
    <location>
        <begin position="250"/>
        <end position="320"/>
    </location>
</feature>
<feature type="region of interest" description="Disordered" evidence="4">
    <location>
        <begin position="739"/>
        <end position="760"/>
    </location>
</feature>
<feature type="compositionally biased region" description="Polar residues" evidence="4">
    <location>
        <begin position="254"/>
        <end position="264"/>
    </location>
</feature>
<feature type="compositionally biased region" description="Acidic residues" evidence="4">
    <location>
        <begin position="277"/>
        <end position="301"/>
    </location>
</feature>
<feature type="compositionally biased region" description="Polar residues" evidence="4">
    <location>
        <begin position="302"/>
        <end position="318"/>
    </location>
</feature>
<feature type="compositionally biased region" description="Low complexity" evidence="4">
    <location>
        <begin position="739"/>
        <end position="748"/>
    </location>
</feature>
<feature type="compositionally biased region" description="Basic and acidic residues" evidence="4">
    <location>
        <begin position="749"/>
        <end position="760"/>
    </location>
</feature>
<feature type="active site" description="Proton acceptor" evidence="2">
    <location>
        <position position="1162"/>
    </location>
</feature>
<feature type="binding site" evidence="3">
    <location>
        <position position="985"/>
    </location>
    <ligand>
        <name>Ca(2+)</name>
        <dbReference type="ChEBI" id="CHEBI:29108"/>
        <label>1</label>
    </ligand>
</feature>
<feature type="binding site" evidence="3">
    <location>
        <position position="987"/>
    </location>
    <ligand>
        <name>Ca(2+)</name>
        <dbReference type="ChEBI" id="CHEBI:29108"/>
        <label>1</label>
    </ligand>
</feature>
<feature type="binding site" evidence="3">
    <location>
        <position position="989"/>
    </location>
    <ligand>
        <name>Ca(2+)</name>
        <dbReference type="ChEBI" id="CHEBI:29108"/>
        <label>1</label>
    </ligand>
</feature>
<feature type="binding site" evidence="3">
    <location>
        <position position="991"/>
    </location>
    <ligand>
        <name>Ca(2+)</name>
        <dbReference type="ChEBI" id="CHEBI:29108"/>
        <label>1</label>
    </ligand>
</feature>
<feature type="binding site" evidence="3">
    <location>
        <position position="996"/>
    </location>
    <ligand>
        <name>Ca(2+)</name>
        <dbReference type="ChEBI" id="CHEBI:29108"/>
        <label>1</label>
    </ligand>
</feature>
<feature type="binding site" evidence="2">
    <location>
        <begin position="1049"/>
        <end position="1057"/>
    </location>
    <ligand>
        <name>ATP</name>
        <dbReference type="ChEBI" id="CHEBI:30616"/>
    </ligand>
</feature>
<feature type="binding site" evidence="2">
    <location>
        <position position="1072"/>
    </location>
    <ligand>
        <name>ATP</name>
        <dbReference type="ChEBI" id="CHEBI:30616"/>
    </ligand>
</feature>
<feature type="binding site" evidence="3">
    <location>
        <position position="1351"/>
    </location>
    <ligand>
        <name>Ca(2+)</name>
        <dbReference type="ChEBI" id="CHEBI:29108"/>
        <label>2</label>
    </ligand>
</feature>
<feature type="binding site" evidence="3">
    <location>
        <position position="1353"/>
    </location>
    <ligand>
        <name>Ca(2+)</name>
        <dbReference type="ChEBI" id="CHEBI:29108"/>
        <label>2</label>
    </ligand>
</feature>
<feature type="binding site" evidence="3">
    <location>
        <position position="1355"/>
    </location>
    <ligand>
        <name>Ca(2+)</name>
        <dbReference type="ChEBI" id="CHEBI:29108"/>
        <label>2</label>
    </ligand>
</feature>
<feature type="binding site" evidence="3">
    <location>
        <position position="1357"/>
    </location>
    <ligand>
        <name>Ca(2+)</name>
        <dbReference type="ChEBI" id="CHEBI:29108"/>
        <label>2</label>
    </ligand>
</feature>
<feature type="binding site" evidence="3">
    <location>
        <position position="1362"/>
    </location>
    <ligand>
        <name>Ca(2+)</name>
        <dbReference type="ChEBI" id="CHEBI:29108"/>
        <label>2</label>
    </ligand>
</feature>
<feature type="binding site" evidence="3">
    <location>
        <position position="1420"/>
    </location>
    <ligand>
        <name>Ca(2+)</name>
        <dbReference type="ChEBI" id="CHEBI:29108"/>
        <label>3</label>
    </ligand>
</feature>
<feature type="binding site" evidence="3">
    <location>
        <position position="1422"/>
    </location>
    <ligand>
        <name>Ca(2+)</name>
        <dbReference type="ChEBI" id="CHEBI:29108"/>
        <label>3</label>
    </ligand>
</feature>
<feature type="binding site" evidence="3">
    <location>
        <position position="1424"/>
    </location>
    <ligand>
        <name>Ca(2+)</name>
        <dbReference type="ChEBI" id="CHEBI:29108"/>
        <label>3</label>
    </ligand>
</feature>
<feature type="binding site" evidence="3">
    <location>
        <position position="1426"/>
    </location>
    <ligand>
        <name>Ca(2+)</name>
        <dbReference type="ChEBI" id="CHEBI:29108"/>
        <label>3</label>
    </ligand>
</feature>
<feature type="binding site" evidence="3">
    <location>
        <position position="1431"/>
    </location>
    <ligand>
        <name>Ca(2+)</name>
        <dbReference type="ChEBI" id="CHEBI:29108"/>
        <label>3</label>
    </ligand>
</feature>